<accession>O86308</accession>
<gene>
    <name type="primary">rpf</name>
</gene>
<keyword id="KW-0903">Direct protein sequencing</keyword>
<keyword id="KW-0378">Hydrolase</keyword>
<keyword id="KW-0964">Secreted</keyword>
<keyword id="KW-0732">Signal</keyword>
<evidence type="ECO:0000255" key="1">
    <source>
        <dbReference type="PROSITE-ProRule" id="PRU01118"/>
    </source>
</evidence>
<evidence type="ECO:0000269" key="2">
    <source>
    </source>
</evidence>
<evidence type="ECO:0000269" key="3">
    <source>
    </source>
</evidence>
<evidence type="ECO:0000269" key="4">
    <source>
    </source>
</evidence>
<evidence type="ECO:0000269" key="5">
    <source>
    </source>
</evidence>
<evidence type="ECO:0000269" key="6">
    <source>
    </source>
</evidence>
<evidence type="ECO:0000305" key="7"/>
<dbReference type="EC" id="3.-.-.-"/>
<dbReference type="EMBL" id="Z96935">
    <property type="protein sequence ID" value="CAB09664.2"/>
    <property type="molecule type" value="Genomic_DNA"/>
</dbReference>
<dbReference type="RefSeq" id="WP_012750944.1">
    <property type="nucleotide sequence ID" value="NZ_QVMY01000031.1"/>
</dbReference>
<dbReference type="SMR" id="O86308"/>
<dbReference type="STRING" id="1232675.GCA_000309825_01208"/>
<dbReference type="GeneID" id="93343312"/>
<dbReference type="PATRIC" id="fig|1270.31.peg.1423"/>
<dbReference type="OMA" id="VKGGWEK"/>
<dbReference type="GO" id="GO:0009986">
    <property type="term" value="C:cell surface"/>
    <property type="evidence" value="ECO:0007669"/>
    <property type="project" value="UniProtKB-SubCell"/>
</dbReference>
<dbReference type="GO" id="GO:0005576">
    <property type="term" value="C:extracellular region"/>
    <property type="evidence" value="ECO:0007669"/>
    <property type="project" value="UniProtKB-SubCell"/>
</dbReference>
<dbReference type="GO" id="GO:0016787">
    <property type="term" value="F:hydrolase activity"/>
    <property type="evidence" value="ECO:0007669"/>
    <property type="project" value="UniProtKB-KW"/>
</dbReference>
<dbReference type="CDD" id="cd00118">
    <property type="entry name" value="LysM"/>
    <property type="match status" value="1"/>
</dbReference>
<dbReference type="CDD" id="cd13925">
    <property type="entry name" value="RPF"/>
    <property type="match status" value="1"/>
</dbReference>
<dbReference type="Gene3D" id="1.10.530.10">
    <property type="match status" value="1"/>
</dbReference>
<dbReference type="Gene3D" id="3.10.350.10">
    <property type="entry name" value="LysM domain"/>
    <property type="match status" value="1"/>
</dbReference>
<dbReference type="InterPro" id="IPR052196">
    <property type="entry name" value="Bact_Kbp"/>
</dbReference>
<dbReference type="InterPro" id="IPR018392">
    <property type="entry name" value="LysM_dom"/>
</dbReference>
<dbReference type="InterPro" id="IPR036779">
    <property type="entry name" value="LysM_dom_sf"/>
</dbReference>
<dbReference type="InterPro" id="IPR023346">
    <property type="entry name" value="Lysozyme-like_dom_sf"/>
</dbReference>
<dbReference type="InterPro" id="IPR010618">
    <property type="entry name" value="RPF"/>
</dbReference>
<dbReference type="NCBIfam" id="NF046106">
    <property type="entry name" value="ResusProRpf"/>
    <property type="match status" value="1"/>
</dbReference>
<dbReference type="PANTHER" id="PTHR34700:SF4">
    <property type="entry name" value="PHAGE-LIKE ELEMENT PBSX PROTEIN XKDP"/>
    <property type="match status" value="1"/>
</dbReference>
<dbReference type="PANTHER" id="PTHR34700">
    <property type="entry name" value="POTASSIUM BINDING PROTEIN KBP"/>
    <property type="match status" value="1"/>
</dbReference>
<dbReference type="Pfam" id="PF01476">
    <property type="entry name" value="LysM"/>
    <property type="match status" value="1"/>
</dbReference>
<dbReference type="Pfam" id="PF06737">
    <property type="entry name" value="Transglycosylas"/>
    <property type="match status" value="1"/>
</dbReference>
<dbReference type="SMART" id="SM00257">
    <property type="entry name" value="LysM"/>
    <property type="match status" value="1"/>
</dbReference>
<dbReference type="SUPFAM" id="SSF54106">
    <property type="entry name" value="LysM domain"/>
    <property type="match status" value="1"/>
</dbReference>
<dbReference type="SUPFAM" id="SSF53955">
    <property type="entry name" value="Lysozyme-like"/>
    <property type="match status" value="1"/>
</dbReference>
<dbReference type="PROSITE" id="PS51782">
    <property type="entry name" value="LYSM"/>
    <property type="match status" value="1"/>
</dbReference>
<proteinExistence type="evidence at protein level"/>
<reference key="1">
    <citation type="journal article" date="1998" name="Proc. Natl. Acad. Sci. U.S.A.">
        <title>A bacterial cytokine.</title>
        <authorList>
            <person name="Mukamolova G.V."/>
            <person name="Kaprelyants A.S."/>
            <person name="Young D.I."/>
            <person name="Young M."/>
            <person name="Kell D.B."/>
        </authorList>
    </citation>
    <scope>NUCLEOTIDE SEQUENCE [GENOMIC DNA]</scope>
    <scope>PROTEIN SEQUENCE OF 42-60 AND 81-92</scope>
    <scope>FUNCTION</scope>
    <scope>SUBCELLULAR LOCATION</scope>
    <scope>POSSIBLE C-TERMINAL CLEAVAGE</scope>
    <source>
        <strain>NCIMB 13267 / IAM 14879 / Fleming strain 2665</strain>
    </source>
</reference>
<reference key="2">
    <citation type="journal article" date="2002" name="Mol. Microbiol.">
        <title>The rpf gene of Micrococcus luteus encodes an essential secreted growth factor.</title>
        <authorList>
            <person name="Mukamolova G.V."/>
            <person name="Turapov O.A."/>
            <person name="Kazarian K."/>
            <person name="Telkov M."/>
            <person name="Kaprelyants A.S."/>
            <person name="Kell D.B."/>
            <person name="Young M."/>
        </authorList>
    </citation>
    <scope>NUCLEOTIDE SEQUENCE [GENOMIC DNA]</scope>
    <scope>SUBCELLULAR LOCATION</scope>
    <scope>INDUCTION</scope>
    <scope>DISRUPTION PHENOTYPE</scope>
    <source>
        <strain>NCIMB 13267 / IAM 14879 / Fleming strain 2665</strain>
    </source>
</reference>
<reference key="3">
    <citation type="journal article" date="2006" name="Mol. Microbiol.">
        <title>Muralytic activity of Micrococcus luteus Rpf and its relationship to physiological activity in promoting bacterial growth and resuscitation.</title>
        <authorList>
            <person name="Mukamolova G.V."/>
            <person name="Murzin A.G."/>
            <person name="Salina E.G."/>
            <person name="Demina G.R."/>
            <person name="Kell D.B."/>
            <person name="Kaprelyants A.S."/>
            <person name="Young M."/>
        </authorList>
    </citation>
    <scope>FUNCTION AS A MURALYTIC ENZYME</scope>
    <scope>OVEREXPRESSION IN E.COLI</scope>
    <scope>MUTAGENESIS OF ASP-48; CYS-53; GLU-54; GLN-72 AND CYS-114</scope>
    <source>
        <strain>NCIMB 13267 / IAM 14879 / Fleming strain 2665</strain>
    </source>
</reference>
<reference key="4">
    <citation type="journal article" date="2009" name="PLoS ONE">
        <title>Finding of the low molecular weight inhibitors of resuscitation promoting factor enzymatic and resuscitation activity.</title>
        <authorList>
            <person name="Demina G.R."/>
            <person name="Makarov V.A."/>
            <person name="Nikitushkin V.D."/>
            <person name="Ryabova O.B."/>
            <person name="Vostroknutova G.N."/>
            <person name="Salina E.G."/>
            <person name="Shleeva M.O."/>
            <person name="Goncharenko A.V."/>
            <person name="Kaprelyants A.S."/>
        </authorList>
    </citation>
    <scope>FUNCTION AS A MURALYTIC ENZYME</scope>
    <scope>ACTIVITY REGULATION</scope>
    <source>
        <strain>NCIMB 13267 / IAM 14879 / Fleming strain 2665</strain>
    </source>
</reference>
<reference key="5">
    <citation type="journal article" date="2013" name="Antonie Van Leeuwenhoek">
        <title>Peptidoglycan fragments stimulate resuscitation of 'non-culturable' mycobacteria.</title>
        <authorList>
            <person name="Nikitushkin V.D."/>
            <person name="Demina G.R."/>
            <person name="Shleeva M.O."/>
            <person name="Kaprelyants A.S."/>
        </authorList>
    </citation>
    <scope>FUNCTION AS A MURALYTIC ENZYME</scope>
    <source>
        <strain>NCIMB 13267 / IAM 14879 / Fleming strain 2665</strain>
    </source>
</reference>
<comment type="function">
    <text evidence="3 4 5 6">Factor that stimulates resuscitation of dormant cells. Has peptidoglycan (PG) hydrolytic activity. Has little to no effect on actively-growing cells. PG fragments could either directly activate the resuscitation pathway of dormant bacteria or serve as a substrate for endogenous Rpf, resulting in low molecular weight products with resuscitation activity. In pM quantities promotes the resuscitation and growth of dormant, nongrowing cells from M.luteus in addition to Mycobacterium tuberculosis, M.avium, M.bovis, M.kansaii and M.smegmatis. Hydrolyzes endogeneous cell walls, peptidoglycan preparations from Mycobacterium tuberculosis and M.smegmatis as well as an artificial lysozyme substrate 4-methylumbelliferyl-beta-D-N,N',N''-triacetylchitotrioside (MUF tri-NAG). Overexpression in E.coli (when the enzyme is targeted to the periplasm) causes cell lysis.</text>
</comment>
<comment type="activity regulation">
    <text evidence="4">Activity on the artificial substrate MUF tri-NAG is inhibited by 2-nitrophenylthiocyanates (NPT) compounds.</text>
</comment>
<comment type="subcellular location">
    <subcellularLocation>
        <location>Secreted</location>
    </subcellularLocation>
    <subcellularLocation>
        <location>Cell surface</location>
    </subcellularLocation>
    <text>Found in culture supernatant, also accumulates on the cell surface.</text>
</comment>
<comment type="induction">
    <text evidence="2">RNA is abundant in early lag phase, decreases by early mid-log phase and is undetectable by stationary phase (48 hours growth). Protein expression is slower; detectable by 5 hours, accumulating during early mid-exponential phase and then gradually disappearing by 50 hours growth (late stationary phase) (at protein level).</text>
</comment>
<comment type="domain">
    <text>The LysM domain is not required for resuscitation activity in vitro; in its absence the protein is active in the fM range.</text>
</comment>
<comment type="PTM">
    <text>May be subject to further C-terminal cleavage as the protein identified in gels is smaller than is expected.</text>
</comment>
<comment type="disruption phenotype">
    <text evidence="2">Essential, it cannot be disrupted.</text>
</comment>
<comment type="similarity">
    <text evidence="7">Belongs to the transglycosylase family. Rpf subfamily.</text>
</comment>
<organism>
    <name type="scientific">Micrococcus luteus</name>
    <name type="common">Micrococcus lysodeikticus</name>
    <dbReference type="NCBI Taxonomy" id="1270"/>
    <lineage>
        <taxon>Bacteria</taxon>
        <taxon>Bacillati</taxon>
        <taxon>Actinomycetota</taxon>
        <taxon>Actinomycetes</taxon>
        <taxon>Micrococcales</taxon>
        <taxon>Micrococcaceae</taxon>
        <taxon>Micrococcus</taxon>
    </lineage>
</organism>
<feature type="signal peptide" evidence="6">
    <location>
        <begin position="1"/>
        <end position="41"/>
    </location>
</feature>
<feature type="chain" id="PRO_5000147745" description="Resuscitation-promoting factor Rpf">
    <location>
        <begin position="42"/>
        <end position="223"/>
    </location>
</feature>
<feature type="domain" description="LysM" evidence="1">
    <location>
        <begin position="172"/>
        <end position="220"/>
    </location>
</feature>
<feature type="region of interest" description="Not required for resuscitation activity">
    <location>
        <begin position="119"/>
        <end position="223"/>
    </location>
</feature>
<feature type="mutagenesis site" description="&lt;2% MUF tri-NAG hydrolysis, 20% M.luteus cell wall muralytic activity, loss of resuscitation activity; when associated with K-54." evidence="3">
    <original>D</original>
    <variation>A</variation>
    <location>
        <position position="48"/>
    </location>
</feature>
<feature type="mutagenesis site" description="6% MUF tri-NAG hydrolysis, 20% M.luteus cell wall muralytic activity, loss of resuscitation activity; when associated with T-114." evidence="3">
    <original>C</original>
    <variation>K</variation>
    <location>
        <position position="53"/>
    </location>
</feature>
<feature type="mutagenesis site" description="30% MUF tri-NAG hydrolysis, 25% M.luteus cell wall muralytic activity, significant loss of resuscitation activity." evidence="3">
    <original>E</original>
    <variation>A</variation>
    <location>
        <position position="54"/>
    </location>
</feature>
<feature type="mutagenesis site" description="&lt;2% MUF tri-NAG hydrolysis, 20% M.luteus cell wall muralytic activity, loss of resuscitation activity; when associated with A-48." evidence="3">
    <original>E</original>
    <variation>K</variation>
    <location>
        <position position="54"/>
    </location>
</feature>
<feature type="mutagenesis site" description="60% MUF tri-NAG hydrolysis, 25% M.luteus cell wall muralytic activity, about 2% resuscitation activity." evidence="3">
    <original>E</original>
    <variation>Q</variation>
    <location>
        <position position="54"/>
    </location>
</feature>
<feature type="mutagenesis site" description="Little effect on function." evidence="3">
    <original>Q</original>
    <variation>K</variation>
    <location>
        <position position="72"/>
    </location>
</feature>
<feature type="mutagenesis site" description="6% MUF tri-NAG hydrolysis, 20% M.luteus cell wall muralytic activity, loss of resuscitation activity; when associated with K-53." evidence="3">
    <original>C</original>
    <variation>T</variation>
    <location>
        <position position="114"/>
    </location>
</feature>
<protein>
    <recommendedName>
        <fullName>Resuscitation-promoting factor Rpf</fullName>
        <ecNumber>3.-.-.-</ecNumber>
    </recommendedName>
</protein>
<name>RPF_MICLU</name>
<sequence length="223" mass="23192">MDTMTLFTTSATRSRRATASIVAGMTLAGAAAVGFSAPAQAATVDTWDRLAECESNGTWDINTGNGFYGGVQFTLSSWQAVGGEGYPHQASKAEQIKRAEILQDLQGWGAWPLCSQKLGLTQADADAGDVDATEAAPVAVERTATVQRQSAADEAAAEQAAAAEQAVVAEAETIVVKSGDSLWTLANEYEVEGGWTALYEANKGAVSDAAVIYVGQELVLPQA</sequence>